<organism>
    <name type="scientific">Paracidovorax citrulli (strain AAC00-1)</name>
    <name type="common">Acidovorax citrulli</name>
    <dbReference type="NCBI Taxonomy" id="397945"/>
    <lineage>
        <taxon>Bacteria</taxon>
        <taxon>Pseudomonadati</taxon>
        <taxon>Pseudomonadota</taxon>
        <taxon>Betaproteobacteria</taxon>
        <taxon>Burkholderiales</taxon>
        <taxon>Comamonadaceae</taxon>
        <taxon>Paracidovorax</taxon>
    </lineage>
</organism>
<comment type="function">
    <text evidence="1">Catalyzes the last two steps in the biosynthesis of 5-methylaminomethyl-2-thiouridine (mnm(5)s(2)U) at the wobble position (U34) in tRNA. Catalyzes the FAD-dependent demodification of cmnm(5)s(2)U34 to nm(5)s(2)U34, followed by the transfer of a methyl group from S-adenosyl-L-methionine to nm(5)s(2)U34, to form mnm(5)s(2)U34.</text>
</comment>
<comment type="catalytic activity">
    <reaction evidence="1">
        <text>5-aminomethyl-2-thiouridine(34) in tRNA + S-adenosyl-L-methionine = 5-methylaminomethyl-2-thiouridine(34) in tRNA + S-adenosyl-L-homocysteine + H(+)</text>
        <dbReference type="Rhea" id="RHEA:19569"/>
        <dbReference type="Rhea" id="RHEA-COMP:10195"/>
        <dbReference type="Rhea" id="RHEA-COMP:10197"/>
        <dbReference type="ChEBI" id="CHEBI:15378"/>
        <dbReference type="ChEBI" id="CHEBI:57856"/>
        <dbReference type="ChEBI" id="CHEBI:59789"/>
        <dbReference type="ChEBI" id="CHEBI:74454"/>
        <dbReference type="ChEBI" id="CHEBI:74455"/>
        <dbReference type="EC" id="2.1.1.61"/>
    </reaction>
</comment>
<comment type="cofactor">
    <cofactor evidence="1">
        <name>FAD</name>
        <dbReference type="ChEBI" id="CHEBI:57692"/>
    </cofactor>
</comment>
<comment type="subcellular location">
    <subcellularLocation>
        <location evidence="1">Cytoplasm</location>
    </subcellularLocation>
</comment>
<comment type="similarity">
    <text evidence="1">In the N-terminal section; belongs to the methyltransferase superfamily. tRNA (mnm(5)s(2)U34)-methyltransferase family.</text>
</comment>
<comment type="similarity">
    <text evidence="1">In the C-terminal section; belongs to the DAO family.</text>
</comment>
<gene>
    <name evidence="1" type="primary">mnmC</name>
    <name type="ordered locus">Aave_3048</name>
</gene>
<dbReference type="EC" id="2.1.1.61" evidence="1"/>
<dbReference type="EC" id="1.5.-.-" evidence="1"/>
<dbReference type="EMBL" id="CP000512">
    <property type="protein sequence ID" value="ABM33615.1"/>
    <property type="molecule type" value="Genomic_DNA"/>
</dbReference>
<dbReference type="RefSeq" id="WP_011796125.1">
    <property type="nucleotide sequence ID" value="NC_008752.1"/>
</dbReference>
<dbReference type="SMR" id="A1TRM7"/>
<dbReference type="STRING" id="397945.Aave_3048"/>
<dbReference type="GeneID" id="79792734"/>
<dbReference type="KEGG" id="aav:Aave_3048"/>
<dbReference type="eggNOG" id="COG0665">
    <property type="taxonomic scope" value="Bacteria"/>
</dbReference>
<dbReference type="eggNOG" id="COG4121">
    <property type="taxonomic scope" value="Bacteria"/>
</dbReference>
<dbReference type="HOGENOM" id="CLU_022427_1_0_4"/>
<dbReference type="OrthoDB" id="9786494at2"/>
<dbReference type="Proteomes" id="UP000002596">
    <property type="component" value="Chromosome"/>
</dbReference>
<dbReference type="GO" id="GO:0005737">
    <property type="term" value="C:cytoplasm"/>
    <property type="evidence" value="ECO:0007669"/>
    <property type="project" value="UniProtKB-SubCell"/>
</dbReference>
<dbReference type="GO" id="GO:0050660">
    <property type="term" value="F:flavin adenine dinucleotide binding"/>
    <property type="evidence" value="ECO:0007669"/>
    <property type="project" value="UniProtKB-UniRule"/>
</dbReference>
<dbReference type="GO" id="GO:0016645">
    <property type="term" value="F:oxidoreductase activity, acting on the CH-NH group of donors"/>
    <property type="evidence" value="ECO:0007669"/>
    <property type="project" value="InterPro"/>
</dbReference>
<dbReference type="GO" id="GO:0004808">
    <property type="term" value="F:tRNA (5-methylaminomethyl-2-thiouridylate)(34)-methyltransferase activity"/>
    <property type="evidence" value="ECO:0007669"/>
    <property type="project" value="UniProtKB-EC"/>
</dbReference>
<dbReference type="GO" id="GO:0032259">
    <property type="term" value="P:methylation"/>
    <property type="evidence" value="ECO:0007669"/>
    <property type="project" value="UniProtKB-KW"/>
</dbReference>
<dbReference type="GO" id="GO:0002097">
    <property type="term" value="P:tRNA wobble base modification"/>
    <property type="evidence" value="ECO:0007669"/>
    <property type="project" value="UniProtKB-UniRule"/>
</dbReference>
<dbReference type="Gene3D" id="3.30.9.10">
    <property type="entry name" value="D-Amino Acid Oxidase, subunit A, domain 2"/>
    <property type="match status" value="1"/>
</dbReference>
<dbReference type="Gene3D" id="3.50.50.60">
    <property type="entry name" value="FAD/NAD(P)-binding domain"/>
    <property type="match status" value="1"/>
</dbReference>
<dbReference type="Gene3D" id="3.40.50.150">
    <property type="entry name" value="Vaccinia Virus protein VP39"/>
    <property type="match status" value="1"/>
</dbReference>
<dbReference type="HAMAP" id="MF_01102">
    <property type="entry name" value="MnmC"/>
    <property type="match status" value="1"/>
</dbReference>
<dbReference type="InterPro" id="IPR006076">
    <property type="entry name" value="FAD-dep_OxRdtase"/>
</dbReference>
<dbReference type="InterPro" id="IPR036188">
    <property type="entry name" value="FAD/NAD-bd_sf"/>
</dbReference>
<dbReference type="InterPro" id="IPR008471">
    <property type="entry name" value="MnmC-like_methylTransf"/>
</dbReference>
<dbReference type="InterPro" id="IPR029063">
    <property type="entry name" value="SAM-dependent_MTases_sf"/>
</dbReference>
<dbReference type="InterPro" id="IPR023032">
    <property type="entry name" value="tRNA_MAMT_biosynth_bifunc_MnmC"/>
</dbReference>
<dbReference type="InterPro" id="IPR047785">
    <property type="entry name" value="tRNA_MNMC2"/>
</dbReference>
<dbReference type="InterPro" id="IPR017610">
    <property type="entry name" value="tRNA_S-uridine_synth_MnmC_C"/>
</dbReference>
<dbReference type="NCBIfam" id="TIGR03197">
    <property type="entry name" value="MnmC_Cterm"/>
    <property type="match status" value="1"/>
</dbReference>
<dbReference type="NCBIfam" id="NF033855">
    <property type="entry name" value="tRNA_MNMC2"/>
    <property type="match status" value="1"/>
</dbReference>
<dbReference type="PANTHER" id="PTHR13847">
    <property type="entry name" value="SARCOSINE DEHYDROGENASE-RELATED"/>
    <property type="match status" value="1"/>
</dbReference>
<dbReference type="PANTHER" id="PTHR13847:SF283">
    <property type="entry name" value="TRNA 5-METHYLAMINOMETHYL-2-THIOURIDINE BIOSYNTHESIS BIFUNCTIONAL PROTEIN MNMC"/>
    <property type="match status" value="1"/>
</dbReference>
<dbReference type="Pfam" id="PF01266">
    <property type="entry name" value="DAO"/>
    <property type="match status" value="1"/>
</dbReference>
<dbReference type="Pfam" id="PF05430">
    <property type="entry name" value="Methyltransf_30"/>
    <property type="match status" value="1"/>
</dbReference>
<dbReference type="SUPFAM" id="SSF51905">
    <property type="entry name" value="FAD/NAD(P)-binding domain"/>
    <property type="match status" value="1"/>
</dbReference>
<sequence length="635" mass="66954">MSEPIDWLPDGTPFNPRFGDRYHSHTGLAQAREVFLRGCGLPGAWAGQAMWRVLETGFGCGLNFLATWAAWRADPARPRLLHFVSCEAFPVSADDLLRSMQGHGELEPLARALHAQYWGLLPGVHRLAFEGGQVLLTLYIGDAQAMLRQQQPVADAVYLDGFSPQVNPELWDVHTLKAVARCCRRGTRLATWSVAGAVREGLAQCGFRVQKVPGLPPKRSNLQAEFDPAWEPRPVQPELPDVRVAGGPSSVLVIGGGLSGAAVAASLARRGWQVRVLDQGAEPAAGASGLPAGVFAPHVSPDDSLLSRLSRCGVRATLQALEASGLSEGEDWSACGVLEHEVDGKHRLPPAWAGDAAVGAEWSRPADAAALEAAGLPGATVAYWHARGGWLRPARLVRALLAHPGIHWQGRSAVARLEPVAAPGGATHWQAYGSDGTVLAEAPHVVVAAGYGSRPWLPARYPIHPLRGQVSWGTRADSPAAAWPPFPVNGHGNLVPHAGTAGGGIWVMGSTFERGQTELPPAPQEQAQAHAANAAKLEQLLPALAQGLAPAIAGPGAAPGHWAAVRCTAPDRLPFVGPVDAARQAGLWVCAAMGARGLTLSQLCGELLAARMMGEPLPVEVRLARALSTERLPAD</sequence>
<name>MNMC_PARC0</name>
<reference key="1">
    <citation type="submission" date="2006-12" db="EMBL/GenBank/DDBJ databases">
        <title>Complete sequence of Acidovorax avenae subsp. citrulli AAC00-1.</title>
        <authorList>
            <person name="Copeland A."/>
            <person name="Lucas S."/>
            <person name="Lapidus A."/>
            <person name="Barry K."/>
            <person name="Detter J.C."/>
            <person name="Glavina del Rio T."/>
            <person name="Dalin E."/>
            <person name="Tice H."/>
            <person name="Pitluck S."/>
            <person name="Kiss H."/>
            <person name="Brettin T."/>
            <person name="Bruce D."/>
            <person name="Han C."/>
            <person name="Tapia R."/>
            <person name="Gilna P."/>
            <person name="Schmutz J."/>
            <person name="Larimer F."/>
            <person name="Land M."/>
            <person name="Hauser L."/>
            <person name="Kyrpides N."/>
            <person name="Kim E."/>
            <person name="Stahl D."/>
            <person name="Richardson P."/>
        </authorList>
    </citation>
    <scope>NUCLEOTIDE SEQUENCE [LARGE SCALE GENOMIC DNA]</scope>
    <source>
        <strain>AAC00-1</strain>
    </source>
</reference>
<keyword id="KW-0963">Cytoplasm</keyword>
<keyword id="KW-0274">FAD</keyword>
<keyword id="KW-0285">Flavoprotein</keyword>
<keyword id="KW-0489">Methyltransferase</keyword>
<keyword id="KW-0511">Multifunctional enzyme</keyword>
<keyword id="KW-0560">Oxidoreductase</keyword>
<keyword id="KW-0949">S-adenosyl-L-methionine</keyword>
<keyword id="KW-0808">Transferase</keyword>
<keyword id="KW-0819">tRNA processing</keyword>
<proteinExistence type="inferred from homology"/>
<protein>
    <recommendedName>
        <fullName evidence="1">tRNA 5-methylaminomethyl-2-thiouridine biosynthesis bifunctional protein MnmC</fullName>
        <shortName evidence="1">tRNA mnm(5)s(2)U biosynthesis bifunctional protein</shortName>
    </recommendedName>
    <domain>
        <recommendedName>
            <fullName evidence="1">tRNA (mnm(5)s(2)U34)-methyltransferase</fullName>
            <ecNumber evidence="1">2.1.1.61</ecNumber>
        </recommendedName>
    </domain>
    <domain>
        <recommendedName>
            <fullName evidence="1">FAD-dependent cmnm(5)s(2)U34 oxidoreductase</fullName>
            <ecNumber evidence="1">1.5.-.-</ecNumber>
        </recommendedName>
    </domain>
</protein>
<feature type="chain" id="PRO_0000347931" description="tRNA 5-methylaminomethyl-2-thiouridine biosynthesis bifunctional protein MnmC">
    <location>
        <begin position="1"/>
        <end position="635"/>
    </location>
</feature>
<feature type="region of interest" description="tRNA (mnm(5)s(2)U34)-methyltransferase">
    <location>
        <begin position="1"/>
        <end position="227"/>
    </location>
</feature>
<feature type="region of interest" description="FAD-dependent cmnm(5)s(2)U34 oxidoreductase">
    <location>
        <begin position="254"/>
        <end position="635"/>
    </location>
</feature>
<accession>A1TRM7</accession>
<evidence type="ECO:0000255" key="1">
    <source>
        <dbReference type="HAMAP-Rule" id="MF_01102"/>
    </source>
</evidence>